<sequence>MPVLYSTGYDLVNLCIGETKKNIKLTEDILDAGMELDFILREYCDSKLPLEEDPFNDDTGRFYVLDKSQIEDNAWILLYLELVVATSFRNHITHGLTSLKILKVAMEISRSPGVSVNMGLDAYDATFYISYKDFCKARVGKEVDRIALVRRILDPQLEILRLGGYTLSSQTIKPSNTMDAGSF</sequence>
<gene>
    <name type="ordered locus">At4g11700</name>
    <name type="ORF">T5C23.130</name>
</gene>
<proteinExistence type="inferred from homology"/>
<name>Y4170_ARATH</name>
<accession>Q9T0D7</accession>
<feature type="chain" id="PRO_0000363124" description="UPF0725 protein At4g11700">
    <location>
        <begin position="1"/>
        <end position="183"/>
    </location>
</feature>
<protein>
    <recommendedName>
        <fullName>UPF0725 protein At4g11700</fullName>
    </recommendedName>
</protein>
<keyword id="KW-1185">Reference proteome</keyword>
<comment type="similarity">
    <text evidence="1">Belongs to the UPF0725 (EMB2204) family.</text>
</comment>
<evidence type="ECO:0000305" key="1"/>
<reference key="1">
    <citation type="journal article" date="1999" name="Nature">
        <title>Sequence and analysis of chromosome 4 of the plant Arabidopsis thaliana.</title>
        <authorList>
            <person name="Mayer K.F.X."/>
            <person name="Schueller C."/>
            <person name="Wambutt R."/>
            <person name="Murphy G."/>
            <person name="Volckaert G."/>
            <person name="Pohl T."/>
            <person name="Duesterhoeft A."/>
            <person name="Stiekema W."/>
            <person name="Entian K.-D."/>
            <person name="Terryn N."/>
            <person name="Harris B."/>
            <person name="Ansorge W."/>
            <person name="Brandt P."/>
            <person name="Grivell L.A."/>
            <person name="Rieger M."/>
            <person name="Weichselgartner M."/>
            <person name="de Simone V."/>
            <person name="Obermaier B."/>
            <person name="Mache R."/>
            <person name="Mueller M."/>
            <person name="Kreis M."/>
            <person name="Delseny M."/>
            <person name="Puigdomenech P."/>
            <person name="Watson M."/>
            <person name="Schmidtheini T."/>
            <person name="Reichert B."/>
            <person name="Portetelle D."/>
            <person name="Perez-Alonso M."/>
            <person name="Boutry M."/>
            <person name="Bancroft I."/>
            <person name="Vos P."/>
            <person name="Hoheisel J."/>
            <person name="Zimmermann W."/>
            <person name="Wedler H."/>
            <person name="Ridley P."/>
            <person name="Langham S.-A."/>
            <person name="McCullagh B."/>
            <person name="Bilham L."/>
            <person name="Robben J."/>
            <person name="van der Schueren J."/>
            <person name="Grymonprez B."/>
            <person name="Chuang Y.-J."/>
            <person name="Vandenbussche F."/>
            <person name="Braeken M."/>
            <person name="Weltjens I."/>
            <person name="Voet M."/>
            <person name="Bastiaens I."/>
            <person name="Aert R."/>
            <person name="Defoor E."/>
            <person name="Weitzenegger T."/>
            <person name="Bothe G."/>
            <person name="Ramsperger U."/>
            <person name="Hilbert H."/>
            <person name="Braun M."/>
            <person name="Holzer E."/>
            <person name="Brandt A."/>
            <person name="Peters S."/>
            <person name="van Staveren M."/>
            <person name="Dirkse W."/>
            <person name="Mooijman P."/>
            <person name="Klein Lankhorst R."/>
            <person name="Rose M."/>
            <person name="Hauf J."/>
            <person name="Koetter P."/>
            <person name="Berneiser S."/>
            <person name="Hempel S."/>
            <person name="Feldpausch M."/>
            <person name="Lamberth S."/>
            <person name="Van den Daele H."/>
            <person name="De Keyser A."/>
            <person name="Buysshaert C."/>
            <person name="Gielen J."/>
            <person name="Villarroel R."/>
            <person name="De Clercq R."/>
            <person name="van Montagu M."/>
            <person name="Rogers J."/>
            <person name="Cronin A."/>
            <person name="Quail M.A."/>
            <person name="Bray-Allen S."/>
            <person name="Clark L."/>
            <person name="Doggett J."/>
            <person name="Hall S."/>
            <person name="Kay M."/>
            <person name="Lennard N."/>
            <person name="McLay K."/>
            <person name="Mayes R."/>
            <person name="Pettett A."/>
            <person name="Rajandream M.A."/>
            <person name="Lyne M."/>
            <person name="Benes V."/>
            <person name="Rechmann S."/>
            <person name="Borkova D."/>
            <person name="Bloecker H."/>
            <person name="Scharfe M."/>
            <person name="Grimm M."/>
            <person name="Loehnert T.-H."/>
            <person name="Dose S."/>
            <person name="de Haan M."/>
            <person name="Maarse A.C."/>
            <person name="Schaefer M."/>
            <person name="Mueller-Auer S."/>
            <person name="Gabel C."/>
            <person name="Fuchs M."/>
            <person name="Fartmann B."/>
            <person name="Granderath K."/>
            <person name="Dauner D."/>
            <person name="Herzl A."/>
            <person name="Neumann S."/>
            <person name="Argiriou A."/>
            <person name="Vitale D."/>
            <person name="Liguori R."/>
            <person name="Piravandi E."/>
            <person name="Massenet O."/>
            <person name="Quigley F."/>
            <person name="Clabauld G."/>
            <person name="Muendlein A."/>
            <person name="Felber R."/>
            <person name="Schnabl S."/>
            <person name="Hiller R."/>
            <person name="Schmidt W."/>
            <person name="Lecharny A."/>
            <person name="Aubourg S."/>
            <person name="Chefdor F."/>
            <person name="Cooke R."/>
            <person name="Berger C."/>
            <person name="Monfort A."/>
            <person name="Casacuberta E."/>
            <person name="Gibbons T."/>
            <person name="Weber N."/>
            <person name="Vandenbol M."/>
            <person name="Bargues M."/>
            <person name="Terol J."/>
            <person name="Torres A."/>
            <person name="Perez-Perez A."/>
            <person name="Purnelle B."/>
            <person name="Bent E."/>
            <person name="Johnson S."/>
            <person name="Tacon D."/>
            <person name="Jesse T."/>
            <person name="Heijnen L."/>
            <person name="Schwarz S."/>
            <person name="Scholler P."/>
            <person name="Heber S."/>
            <person name="Francs P."/>
            <person name="Bielke C."/>
            <person name="Frishman D."/>
            <person name="Haase D."/>
            <person name="Lemcke K."/>
            <person name="Mewes H.-W."/>
            <person name="Stocker S."/>
            <person name="Zaccaria P."/>
            <person name="Bevan M."/>
            <person name="Wilson R.K."/>
            <person name="de la Bastide M."/>
            <person name="Habermann K."/>
            <person name="Parnell L."/>
            <person name="Dedhia N."/>
            <person name="Gnoj L."/>
            <person name="Schutz K."/>
            <person name="Huang E."/>
            <person name="Spiegel L."/>
            <person name="Sekhon M."/>
            <person name="Murray J."/>
            <person name="Sheet P."/>
            <person name="Cordes M."/>
            <person name="Abu-Threideh J."/>
            <person name="Stoneking T."/>
            <person name="Kalicki J."/>
            <person name="Graves T."/>
            <person name="Harmon G."/>
            <person name="Edwards J."/>
            <person name="Latreille P."/>
            <person name="Courtney L."/>
            <person name="Cloud J."/>
            <person name="Abbott A."/>
            <person name="Scott K."/>
            <person name="Johnson D."/>
            <person name="Minx P."/>
            <person name="Bentley D."/>
            <person name="Fulton B."/>
            <person name="Miller N."/>
            <person name="Greco T."/>
            <person name="Kemp K."/>
            <person name="Kramer J."/>
            <person name="Fulton L."/>
            <person name="Mardis E."/>
            <person name="Dante M."/>
            <person name="Pepin K."/>
            <person name="Hillier L.W."/>
            <person name="Nelson J."/>
            <person name="Spieth J."/>
            <person name="Ryan E."/>
            <person name="Andrews S."/>
            <person name="Geisel C."/>
            <person name="Layman D."/>
            <person name="Du H."/>
            <person name="Ali J."/>
            <person name="Berghoff A."/>
            <person name="Jones K."/>
            <person name="Drone K."/>
            <person name="Cotton M."/>
            <person name="Joshu C."/>
            <person name="Antonoiu B."/>
            <person name="Zidanic M."/>
            <person name="Strong C."/>
            <person name="Sun H."/>
            <person name="Lamar B."/>
            <person name="Yordan C."/>
            <person name="Ma P."/>
            <person name="Zhong J."/>
            <person name="Preston R."/>
            <person name="Vil D."/>
            <person name="Shekher M."/>
            <person name="Matero A."/>
            <person name="Shah R."/>
            <person name="Swaby I.K."/>
            <person name="O'Shaughnessy A."/>
            <person name="Rodriguez M."/>
            <person name="Hoffman J."/>
            <person name="Till S."/>
            <person name="Granat S."/>
            <person name="Shohdy N."/>
            <person name="Hasegawa A."/>
            <person name="Hameed A."/>
            <person name="Lodhi M."/>
            <person name="Johnson A."/>
            <person name="Chen E."/>
            <person name="Marra M.A."/>
            <person name="Martienssen R."/>
            <person name="McCombie W.R."/>
        </authorList>
    </citation>
    <scope>NUCLEOTIDE SEQUENCE [LARGE SCALE GENOMIC DNA]</scope>
    <source>
        <strain>cv. Columbia</strain>
    </source>
</reference>
<reference key="2">
    <citation type="journal article" date="2017" name="Plant J.">
        <title>Araport11: a complete reannotation of the Arabidopsis thaliana reference genome.</title>
        <authorList>
            <person name="Cheng C.Y."/>
            <person name="Krishnakumar V."/>
            <person name="Chan A.P."/>
            <person name="Thibaud-Nissen F."/>
            <person name="Schobel S."/>
            <person name="Town C.D."/>
        </authorList>
    </citation>
    <scope>GENOME REANNOTATION</scope>
    <source>
        <strain>cv. Columbia</strain>
    </source>
</reference>
<organism>
    <name type="scientific">Arabidopsis thaliana</name>
    <name type="common">Mouse-ear cress</name>
    <dbReference type="NCBI Taxonomy" id="3702"/>
    <lineage>
        <taxon>Eukaryota</taxon>
        <taxon>Viridiplantae</taxon>
        <taxon>Streptophyta</taxon>
        <taxon>Embryophyta</taxon>
        <taxon>Tracheophyta</taxon>
        <taxon>Spermatophyta</taxon>
        <taxon>Magnoliopsida</taxon>
        <taxon>eudicotyledons</taxon>
        <taxon>Gunneridae</taxon>
        <taxon>Pentapetalae</taxon>
        <taxon>rosids</taxon>
        <taxon>malvids</taxon>
        <taxon>Brassicales</taxon>
        <taxon>Brassicaceae</taxon>
        <taxon>Camelineae</taxon>
        <taxon>Arabidopsis</taxon>
    </lineage>
</organism>
<dbReference type="EMBL" id="AL049500">
    <property type="protein sequence ID" value="CAB39941.1"/>
    <property type="molecule type" value="Genomic_DNA"/>
</dbReference>
<dbReference type="EMBL" id="AL161532">
    <property type="protein sequence ID" value="CAB78213.1"/>
    <property type="molecule type" value="Genomic_DNA"/>
</dbReference>
<dbReference type="EMBL" id="CP002687">
    <property type="protein sequence ID" value="AEE83040.1"/>
    <property type="molecule type" value="Genomic_DNA"/>
</dbReference>
<dbReference type="PIR" id="T04217">
    <property type="entry name" value="T04217"/>
</dbReference>
<dbReference type="RefSeq" id="NP_192907.1">
    <property type="nucleotide sequence ID" value="NM_117239.1"/>
</dbReference>
<dbReference type="SMR" id="Q9T0D7"/>
<dbReference type="STRING" id="3702.Q9T0D7"/>
<dbReference type="PaxDb" id="3702-AT4G11700.1"/>
<dbReference type="EnsemblPlants" id="AT4G11700.1">
    <property type="protein sequence ID" value="AT4G11700.1"/>
    <property type="gene ID" value="AT4G11700"/>
</dbReference>
<dbReference type="GeneID" id="826775"/>
<dbReference type="Gramene" id="AT4G11700.1">
    <property type="protein sequence ID" value="AT4G11700.1"/>
    <property type="gene ID" value="AT4G11700"/>
</dbReference>
<dbReference type="KEGG" id="ath:AT4G11700"/>
<dbReference type="Araport" id="AT4G11700"/>
<dbReference type="TAIR" id="AT4G11700"/>
<dbReference type="HOGENOM" id="CLU_1477122_0_0_1"/>
<dbReference type="InParanoid" id="Q9T0D7"/>
<dbReference type="OMA" id="FCKARVG"/>
<dbReference type="PhylomeDB" id="Q9T0D7"/>
<dbReference type="PRO" id="PR:Q9T0D7"/>
<dbReference type="Proteomes" id="UP000006548">
    <property type="component" value="Chromosome 4"/>
</dbReference>
<dbReference type="ExpressionAtlas" id="Q9T0D7">
    <property type="expression patterns" value="baseline and differential"/>
</dbReference>
<dbReference type="InterPro" id="IPR006462">
    <property type="entry name" value="MS5"/>
</dbReference>
<dbReference type="Pfam" id="PF04776">
    <property type="entry name" value="protein_MS5"/>
    <property type="match status" value="1"/>
</dbReference>